<gene>
    <name evidence="1" type="primary">prsA</name>
    <name type="ordered locus">SAK_0932</name>
</gene>
<name>PRSA_STRA1</name>
<organism>
    <name type="scientific">Streptococcus agalactiae serotype Ia (strain ATCC 27591 / A909 / CDC SS700)</name>
    <dbReference type="NCBI Taxonomy" id="205921"/>
    <lineage>
        <taxon>Bacteria</taxon>
        <taxon>Bacillati</taxon>
        <taxon>Bacillota</taxon>
        <taxon>Bacilli</taxon>
        <taxon>Lactobacillales</taxon>
        <taxon>Streptococcaceae</taxon>
        <taxon>Streptococcus</taxon>
    </lineage>
</organism>
<evidence type="ECO:0000255" key="1">
    <source>
        <dbReference type="HAMAP-Rule" id="MF_01145"/>
    </source>
</evidence>
<sequence length="309" mass="33877">MKTRSKLAAGFLTLMSVATLAACSGKTSNGTNVVTMKGDTITVSDFYDQVKTSKAAQQSMLTLILSRVFDTQYGDKVSDKKVSEAYNKTAKGYGNSFSSALSQAGLTPEGYKQQIRTTMLVEYAVKEAAKKELTEANYKEAYKNYTPETSVQVIKLDAEDKAKSVLKDVKADGADFAKIAKEKTTATDKKVEYKFDSAGTSLPKEVMSAAFKLDKNGVSDVVSTVDSTTYKTSYYIIKVTDKTEKKSDWKSYKNRLKEVILKDKTSDRAFQNKVISKALEKANVKIKDKAFAGILSQYATTSGSSSLKK</sequence>
<feature type="signal peptide" evidence="1">
    <location>
        <begin position="1"/>
        <end position="22"/>
    </location>
</feature>
<feature type="chain" id="PRO_1000085061" description="Foldase protein PrsA">
    <location>
        <begin position="23"/>
        <end position="309"/>
    </location>
</feature>
<feature type="domain" description="PpiC" evidence="1">
    <location>
        <begin position="146"/>
        <end position="241"/>
    </location>
</feature>
<feature type="lipid moiety-binding region" description="N-palmitoyl cysteine" evidence="1">
    <location>
        <position position="23"/>
    </location>
</feature>
<feature type="lipid moiety-binding region" description="S-diacylglycerol cysteine" evidence="1">
    <location>
        <position position="23"/>
    </location>
</feature>
<accession>Q3K1P9</accession>
<comment type="function">
    <text evidence="1">Plays a major role in protein secretion by helping the post-translocational extracellular folding of several secreted proteins.</text>
</comment>
<comment type="catalytic activity">
    <reaction evidence="1">
        <text>[protein]-peptidylproline (omega=180) = [protein]-peptidylproline (omega=0)</text>
        <dbReference type="Rhea" id="RHEA:16237"/>
        <dbReference type="Rhea" id="RHEA-COMP:10747"/>
        <dbReference type="Rhea" id="RHEA-COMP:10748"/>
        <dbReference type="ChEBI" id="CHEBI:83833"/>
        <dbReference type="ChEBI" id="CHEBI:83834"/>
        <dbReference type="EC" id="5.2.1.8"/>
    </reaction>
</comment>
<comment type="subcellular location">
    <subcellularLocation>
        <location evidence="1">Cell membrane</location>
        <topology evidence="1">Lipid-anchor</topology>
    </subcellularLocation>
</comment>
<comment type="similarity">
    <text evidence="1">Belongs to the PrsA family.</text>
</comment>
<proteinExistence type="inferred from homology"/>
<dbReference type="EC" id="5.2.1.8" evidence="1"/>
<dbReference type="EMBL" id="CP000114">
    <property type="protein sequence ID" value="ABA45724.1"/>
    <property type="molecule type" value="Genomic_DNA"/>
</dbReference>
<dbReference type="RefSeq" id="WP_000857817.1">
    <property type="nucleotide sequence ID" value="NC_007432.1"/>
</dbReference>
<dbReference type="SMR" id="Q3K1P9"/>
<dbReference type="KEGG" id="sak:SAK_0932"/>
<dbReference type="HOGENOM" id="CLU_034646_6_0_9"/>
<dbReference type="GO" id="GO:0005886">
    <property type="term" value="C:plasma membrane"/>
    <property type="evidence" value="ECO:0007669"/>
    <property type="project" value="UniProtKB-SubCell"/>
</dbReference>
<dbReference type="GO" id="GO:0003755">
    <property type="term" value="F:peptidyl-prolyl cis-trans isomerase activity"/>
    <property type="evidence" value="ECO:0007669"/>
    <property type="project" value="UniProtKB-UniRule"/>
</dbReference>
<dbReference type="GO" id="GO:0006457">
    <property type="term" value="P:protein folding"/>
    <property type="evidence" value="ECO:0007669"/>
    <property type="project" value="UniProtKB-UniRule"/>
</dbReference>
<dbReference type="Gene3D" id="3.10.50.40">
    <property type="match status" value="1"/>
</dbReference>
<dbReference type="HAMAP" id="MF_01145">
    <property type="entry name" value="Foldase_PrsA"/>
    <property type="match status" value="1"/>
</dbReference>
<dbReference type="InterPro" id="IPR023059">
    <property type="entry name" value="Foldase_PrsA"/>
</dbReference>
<dbReference type="InterPro" id="IPR046357">
    <property type="entry name" value="PPIase_dom_sf"/>
</dbReference>
<dbReference type="InterPro" id="IPR000297">
    <property type="entry name" value="PPIase_PpiC"/>
</dbReference>
<dbReference type="InterPro" id="IPR050245">
    <property type="entry name" value="PrsA_foldase"/>
</dbReference>
<dbReference type="InterPro" id="IPR027304">
    <property type="entry name" value="Trigger_fact/SurA_dom_sf"/>
</dbReference>
<dbReference type="NCBIfam" id="NF002361">
    <property type="entry name" value="PRK01326.1"/>
    <property type="match status" value="1"/>
</dbReference>
<dbReference type="PANTHER" id="PTHR47245:SF1">
    <property type="entry name" value="FOLDASE PROTEIN PRSA"/>
    <property type="match status" value="1"/>
</dbReference>
<dbReference type="PANTHER" id="PTHR47245">
    <property type="entry name" value="PEPTIDYLPROLYL ISOMERASE"/>
    <property type="match status" value="1"/>
</dbReference>
<dbReference type="Pfam" id="PF13145">
    <property type="entry name" value="Rotamase_2"/>
    <property type="match status" value="1"/>
</dbReference>
<dbReference type="SUPFAM" id="SSF54534">
    <property type="entry name" value="FKBP-like"/>
    <property type="match status" value="1"/>
</dbReference>
<dbReference type="SUPFAM" id="SSF109998">
    <property type="entry name" value="Triger factor/SurA peptide-binding domain-like"/>
    <property type="match status" value="1"/>
</dbReference>
<dbReference type="PROSITE" id="PS50198">
    <property type="entry name" value="PPIC_PPIASE_2"/>
    <property type="match status" value="1"/>
</dbReference>
<dbReference type="PROSITE" id="PS51257">
    <property type="entry name" value="PROKAR_LIPOPROTEIN"/>
    <property type="match status" value="1"/>
</dbReference>
<protein>
    <recommendedName>
        <fullName evidence="1">Foldase protein PrsA</fullName>
        <ecNumber evidence="1">5.2.1.8</ecNumber>
    </recommendedName>
</protein>
<keyword id="KW-1003">Cell membrane</keyword>
<keyword id="KW-0413">Isomerase</keyword>
<keyword id="KW-0449">Lipoprotein</keyword>
<keyword id="KW-0472">Membrane</keyword>
<keyword id="KW-0564">Palmitate</keyword>
<keyword id="KW-0697">Rotamase</keyword>
<keyword id="KW-0732">Signal</keyword>
<reference key="1">
    <citation type="journal article" date="2005" name="Proc. Natl. Acad. Sci. U.S.A.">
        <title>Genome analysis of multiple pathogenic isolates of Streptococcus agalactiae: implications for the microbial 'pan-genome'.</title>
        <authorList>
            <person name="Tettelin H."/>
            <person name="Masignani V."/>
            <person name="Cieslewicz M.J."/>
            <person name="Donati C."/>
            <person name="Medini D."/>
            <person name="Ward N.L."/>
            <person name="Angiuoli S.V."/>
            <person name="Crabtree J."/>
            <person name="Jones A.L."/>
            <person name="Durkin A.S."/>
            <person name="DeBoy R.T."/>
            <person name="Davidsen T.M."/>
            <person name="Mora M."/>
            <person name="Scarselli M."/>
            <person name="Margarit y Ros I."/>
            <person name="Peterson J.D."/>
            <person name="Hauser C.R."/>
            <person name="Sundaram J.P."/>
            <person name="Nelson W.C."/>
            <person name="Madupu R."/>
            <person name="Brinkac L.M."/>
            <person name="Dodson R.J."/>
            <person name="Rosovitz M.J."/>
            <person name="Sullivan S.A."/>
            <person name="Daugherty S.C."/>
            <person name="Haft D.H."/>
            <person name="Selengut J."/>
            <person name="Gwinn M.L."/>
            <person name="Zhou L."/>
            <person name="Zafar N."/>
            <person name="Khouri H."/>
            <person name="Radune D."/>
            <person name="Dimitrov G."/>
            <person name="Watkins K."/>
            <person name="O'Connor K.J."/>
            <person name="Smith S."/>
            <person name="Utterback T.R."/>
            <person name="White O."/>
            <person name="Rubens C.E."/>
            <person name="Grandi G."/>
            <person name="Madoff L.C."/>
            <person name="Kasper D.L."/>
            <person name="Telford J.L."/>
            <person name="Wessels M.R."/>
            <person name="Rappuoli R."/>
            <person name="Fraser C.M."/>
        </authorList>
    </citation>
    <scope>NUCLEOTIDE SEQUENCE [LARGE SCALE GENOMIC DNA]</scope>
    <source>
        <strain>ATCC 27591 / A909 / CDC SS700</strain>
    </source>
</reference>